<evidence type="ECO:0000250" key="1"/>
<evidence type="ECO:0000255" key="2">
    <source>
        <dbReference type="PROSITE-ProRule" id="PRU01230"/>
    </source>
</evidence>
<evidence type="ECO:0000305" key="3"/>
<accession>Q4VT38</accession>
<accession>A8WW16</accession>
<accession>Q61XD2</accession>
<organism>
    <name type="scientific">Caenorhabditis briggsae</name>
    <dbReference type="NCBI Taxonomy" id="6238"/>
    <lineage>
        <taxon>Eukaryota</taxon>
        <taxon>Metazoa</taxon>
        <taxon>Ecdysozoa</taxon>
        <taxon>Nematoda</taxon>
        <taxon>Chromadorea</taxon>
        <taxon>Rhabditida</taxon>
        <taxon>Rhabditina</taxon>
        <taxon>Rhabditomorpha</taxon>
        <taxon>Rhabditoidea</taxon>
        <taxon>Rhabditidae</taxon>
        <taxon>Peloderinae</taxon>
        <taxon>Caenorhabditis</taxon>
    </lineage>
</organism>
<feature type="chain" id="PRO_0000203652" description="Guanine nucleotide-binding protein alpha-14 subunit">
    <location>
        <begin position="1"/>
        <end position="408"/>
    </location>
</feature>
<feature type="domain" description="G-alpha" evidence="2">
    <location>
        <begin position="70"/>
        <end position="408"/>
    </location>
</feature>
<feature type="region of interest" description="G1 motif" evidence="2">
    <location>
        <begin position="73"/>
        <end position="86"/>
    </location>
</feature>
<feature type="region of interest" description="G2 motif" evidence="2">
    <location>
        <begin position="214"/>
        <end position="222"/>
    </location>
</feature>
<feature type="region of interest" description="G3 motif" evidence="2">
    <location>
        <begin position="237"/>
        <end position="246"/>
    </location>
</feature>
<feature type="region of interest" description="G4 motif" evidence="2">
    <location>
        <begin position="321"/>
        <end position="328"/>
    </location>
</feature>
<feature type="region of interest" description="G5 motif" evidence="2">
    <location>
        <begin position="378"/>
        <end position="383"/>
    </location>
</feature>
<feature type="binding site" evidence="1">
    <location>
        <begin position="38"/>
        <end position="45"/>
    </location>
    <ligand>
        <name>GTP</name>
        <dbReference type="ChEBI" id="CHEBI:37565"/>
    </ligand>
</feature>
<feature type="binding site" evidence="1">
    <location>
        <begin position="78"/>
        <end position="85"/>
    </location>
    <ligand>
        <name>GTP</name>
        <dbReference type="ChEBI" id="CHEBI:37565"/>
    </ligand>
</feature>
<feature type="binding site" evidence="1">
    <location>
        <position position="85"/>
    </location>
    <ligand>
        <name>Mg(2+)</name>
        <dbReference type="ChEBI" id="CHEBI:18420"/>
    </ligand>
</feature>
<feature type="binding site" evidence="1">
    <location>
        <begin position="201"/>
        <end position="205"/>
    </location>
    <ligand>
        <name>GTP</name>
        <dbReference type="ChEBI" id="CHEBI:37565"/>
    </ligand>
</feature>
<feature type="binding site" evidence="1">
    <location>
        <begin position="216"/>
        <end position="222"/>
    </location>
    <ligand>
        <name>GTP</name>
        <dbReference type="ChEBI" id="CHEBI:37565"/>
    </ligand>
</feature>
<feature type="binding site" evidence="1">
    <location>
        <position position="222"/>
    </location>
    <ligand>
        <name>Mg(2+)</name>
        <dbReference type="ChEBI" id="CHEBI:18420"/>
    </ligand>
</feature>
<feature type="binding site" evidence="1">
    <location>
        <begin position="241"/>
        <end position="245"/>
    </location>
    <ligand>
        <name>GTP</name>
        <dbReference type="ChEBI" id="CHEBI:37565"/>
    </ligand>
</feature>
<feature type="binding site" evidence="1">
    <location>
        <begin position="285"/>
        <end position="288"/>
    </location>
    <ligand>
        <name>GTP</name>
        <dbReference type="ChEBI" id="CHEBI:37565"/>
    </ligand>
</feature>
<feature type="binding site" evidence="1">
    <location>
        <begin position="325"/>
        <end position="328"/>
    </location>
    <ligand>
        <name>GTP</name>
        <dbReference type="ChEBI" id="CHEBI:37565"/>
    </ligand>
</feature>
<feature type="binding site" evidence="1">
    <location>
        <position position="380"/>
    </location>
    <ligand>
        <name>GTP</name>
        <dbReference type="ChEBI" id="CHEBI:37565"/>
    </ligand>
</feature>
<feature type="splice variant" id="VSP_038479" description="In isoform a." evidence="3">
    <location>
        <begin position="1"/>
        <end position="23"/>
    </location>
</feature>
<feature type="splice variant" id="VSP_038480" description="In isoform a." evidence="3">
    <location>
        <begin position="36"/>
        <end position="51"/>
    </location>
</feature>
<proteinExistence type="inferred from homology"/>
<comment type="function">
    <text>Guanine nucleotide-binding proteins (G proteins) are involved as modulators or transducers in various transmembrane signaling systems.</text>
</comment>
<comment type="subunit">
    <text>G proteins are composed of 3 units; alpha, beta and gamma. The alpha chain contains the guanine nucleotide binding site.</text>
</comment>
<comment type="alternative products">
    <event type="alternative splicing"/>
    <isoform>
        <id>Q4VT38-1</id>
        <name>b</name>
        <sequence type="displayed"/>
    </isoform>
    <isoform>
        <id>Q4VT38-2</id>
        <name>a</name>
        <sequence type="described" ref="VSP_038479 VSP_038480"/>
    </isoform>
</comment>
<comment type="similarity">
    <text evidence="3">Belongs to the G-alpha family.</text>
</comment>
<protein>
    <recommendedName>
        <fullName>Guanine nucleotide-binding protein alpha-14 subunit</fullName>
    </recommendedName>
</protein>
<dbReference type="EMBL" id="AY634292">
    <property type="protein sequence ID" value="AAW02898.1"/>
    <property type="molecule type" value="Genomic_DNA"/>
</dbReference>
<dbReference type="EMBL" id="HE600906">
    <property type="protein sequence ID" value="CAP24825.3"/>
    <property type="molecule type" value="Genomic_DNA"/>
</dbReference>
<dbReference type="RefSeq" id="XP_002639438.1">
    <molecule id="Q4VT38-1"/>
    <property type="nucleotide sequence ID" value="XM_002639392.1"/>
</dbReference>
<dbReference type="SMR" id="Q4VT38"/>
<dbReference type="FunCoup" id="Q4VT38">
    <property type="interactions" value="6"/>
</dbReference>
<dbReference type="STRING" id="6238.Q4VT38"/>
<dbReference type="EnsemblMetazoa" id="CBG04031.1">
    <molecule id="Q4VT38-1"/>
    <property type="protein sequence ID" value="CBG04031.1"/>
    <property type="gene ID" value="WBGene00026779"/>
</dbReference>
<dbReference type="KEGG" id="cbr:CBG_04031"/>
<dbReference type="CTD" id="8581431"/>
<dbReference type="WormBase" id="CBG04031">
    <property type="protein sequence ID" value="CBP14855"/>
    <property type="gene ID" value="WBGene00026779"/>
    <property type="gene designation" value="Cbr-gpa-14"/>
</dbReference>
<dbReference type="eggNOG" id="KOG0082">
    <property type="taxonomic scope" value="Eukaryota"/>
</dbReference>
<dbReference type="HOGENOM" id="CLU_014184_2_1_1"/>
<dbReference type="InParanoid" id="Q4VT38"/>
<dbReference type="OMA" id="CYQCMHG"/>
<dbReference type="Proteomes" id="UP000008549">
    <property type="component" value="Unassembled WGS sequence"/>
</dbReference>
<dbReference type="GO" id="GO:0005737">
    <property type="term" value="C:cytoplasm"/>
    <property type="evidence" value="ECO:0000318"/>
    <property type="project" value="GO_Central"/>
</dbReference>
<dbReference type="GO" id="GO:0005834">
    <property type="term" value="C:heterotrimeric G-protein complex"/>
    <property type="evidence" value="ECO:0000318"/>
    <property type="project" value="GO_Central"/>
</dbReference>
<dbReference type="GO" id="GO:0001664">
    <property type="term" value="F:G protein-coupled receptor binding"/>
    <property type="evidence" value="ECO:0000318"/>
    <property type="project" value="GO_Central"/>
</dbReference>
<dbReference type="GO" id="GO:0031683">
    <property type="term" value="F:G-protein beta/gamma-subunit complex binding"/>
    <property type="evidence" value="ECO:0000318"/>
    <property type="project" value="GO_Central"/>
</dbReference>
<dbReference type="GO" id="GO:0005525">
    <property type="term" value="F:GTP binding"/>
    <property type="evidence" value="ECO:0007669"/>
    <property type="project" value="UniProtKB-KW"/>
</dbReference>
<dbReference type="GO" id="GO:0003924">
    <property type="term" value="F:GTPase activity"/>
    <property type="evidence" value="ECO:0000318"/>
    <property type="project" value="GO_Central"/>
</dbReference>
<dbReference type="GO" id="GO:0046872">
    <property type="term" value="F:metal ion binding"/>
    <property type="evidence" value="ECO:0007669"/>
    <property type="project" value="UniProtKB-KW"/>
</dbReference>
<dbReference type="GO" id="GO:0007188">
    <property type="term" value="P:adenylate cyclase-modulating G protein-coupled receptor signaling pathway"/>
    <property type="evidence" value="ECO:0000318"/>
    <property type="project" value="GO_Central"/>
</dbReference>
<dbReference type="CDD" id="cd00066">
    <property type="entry name" value="G-alpha"/>
    <property type="match status" value="1"/>
</dbReference>
<dbReference type="FunFam" id="1.10.400.10:FF:000037">
    <property type="entry name" value="Guanine nucleotide-binding protein alpha-14 subunit"/>
    <property type="match status" value="1"/>
</dbReference>
<dbReference type="FunFam" id="3.40.50.300:FF:000181">
    <property type="entry name" value="Guanine nucleotide-binding protein subunit alpha"/>
    <property type="match status" value="1"/>
</dbReference>
<dbReference type="Gene3D" id="1.10.400.10">
    <property type="entry name" value="GI Alpha 1, domain 2-like"/>
    <property type="match status" value="1"/>
</dbReference>
<dbReference type="Gene3D" id="3.40.50.300">
    <property type="entry name" value="P-loop containing nucleotide triphosphate hydrolases"/>
    <property type="match status" value="1"/>
</dbReference>
<dbReference type="InterPro" id="IPR001019">
    <property type="entry name" value="Gprotein_alpha_su"/>
</dbReference>
<dbReference type="InterPro" id="IPR011025">
    <property type="entry name" value="GproteinA_insert"/>
</dbReference>
<dbReference type="InterPro" id="IPR027417">
    <property type="entry name" value="P-loop_NTPase"/>
</dbReference>
<dbReference type="PANTHER" id="PTHR10218">
    <property type="entry name" value="GTP-BINDING PROTEIN ALPHA SUBUNIT"/>
    <property type="match status" value="1"/>
</dbReference>
<dbReference type="PANTHER" id="PTHR10218:SF208">
    <property type="entry name" value="GUANINE NUCLEOTIDE-BINDING PROTEIN ALPHA-14 SUBUNIT"/>
    <property type="match status" value="1"/>
</dbReference>
<dbReference type="Pfam" id="PF00503">
    <property type="entry name" value="G-alpha"/>
    <property type="match status" value="1"/>
</dbReference>
<dbReference type="PRINTS" id="PR00318">
    <property type="entry name" value="GPROTEINA"/>
</dbReference>
<dbReference type="SMART" id="SM00275">
    <property type="entry name" value="G_alpha"/>
    <property type="match status" value="1"/>
</dbReference>
<dbReference type="SUPFAM" id="SSF52540">
    <property type="entry name" value="P-loop containing nucleoside triphosphate hydrolases"/>
    <property type="match status" value="1"/>
</dbReference>
<dbReference type="SUPFAM" id="SSF47895">
    <property type="entry name" value="Transducin (alpha subunit), insertion domain"/>
    <property type="match status" value="1"/>
</dbReference>
<dbReference type="PROSITE" id="PS51882">
    <property type="entry name" value="G_ALPHA"/>
    <property type="match status" value="1"/>
</dbReference>
<reference key="1">
    <citation type="journal article" date="2005" name="Mol. Genet. Genomics">
        <title>Functional constraint and divergence in the G protein family in Caenorhabditis elegans and Caenorhabditis briggsae.</title>
        <authorList>
            <person name="Jovelin R."/>
            <person name="Phillips P.C."/>
        </authorList>
    </citation>
    <scope>NUCLEOTIDE SEQUENCE [GENOMIC DNA]</scope>
    <source>
        <strain>AF16</strain>
    </source>
</reference>
<reference key="2">
    <citation type="journal article" date="2003" name="PLoS Biol.">
        <title>The genome sequence of Caenorhabditis briggsae: a platform for comparative genomics.</title>
        <authorList>
            <person name="Stein L.D."/>
            <person name="Bao Z."/>
            <person name="Blasiar D."/>
            <person name="Blumenthal T."/>
            <person name="Brent M.R."/>
            <person name="Chen N."/>
            <person name="Chinwalla A."/>
            <person name="Clarke L."/>
            <person name="Clee C."/>
            <person name="Coghlan A."/>
            <person name="Coulson A."/>
            <person name="D'Eustachio P."/>
            <person name="Fitch D.H.A."/>
            <person name="Fulton L.A."/>
            <person name="Fulton R.E."/>
            <person name="Griffiths-Jones S."/>
            <person name="Harris T.W."/>
            <person name="Hillier L.W."/>
            <person name="Kamath R."/>
            <person name="Kuwabara P.E."/>
            <person name="Mardis E.R."/>
            <person name="Marra M.A."/>
            <person name="Miner T.L."/>
            <person name="Minx P."/>
            <person name="Mullikin J.C."/>
            <person name="Plumb R.W."/>
            <person name="Rogers J."/>
            <person name="Schein J.E."/>
            <person name="Sohrmann M."/>
            <person name="Spieth J."/>
            <person name="Stajich J.E."/>
            <person name="Wei C."/>
            <person name="Willey D."/>
            <person name="Wilson R.K."/>
            <person name="Durbin R.M."/>
            <person name="Waterston R.H."/>
        </authorList>
    </citation>
    <scope>NUCLEOTIDE SEQUENCE [LARGE SCALE GENOMIC DNA]</scope>
    <source>
        <strain>AF16</strain>
    </source>
</reference>
<gene>
    <name type="primary">gpa-14</name>
    <name type="ORF">CBG04031</name>
</gene>
<keyword id="KW-0025">Alternative splicing</keyword>
<keyword id="KW-0342">GTP-binding</keyword>
<keyword id="KW-0460">Magnesium</keyword>
<keyword id="KW-0479">Metal-binding</keyword>
<keyword id="KW-0547">Nucleotide-binding</keyword>
<keyword id="KW-1185">Reference proteome</keyword>
<keyword id="KW-0807">Transducer</keyword>
<sequence length="408" mass="46387">MFSCFNNLGLDYCYQCMHGPEGCMVPSRQGDGGELYAHSEELEAKLRGLAKKESLEIEKSLENDKKTYGSHIKILILGGPSSGKSTIFKQMQIIHSNGFKTEQELIQYRGLIDTNIRQTYRQLVSGARVVGISLESLESLVHDINKVYAPMAADEFSIRTIPDVVEPLTAFWNSREIQEVYKRRYEFELLDSTKYYLENLNRISKSDYLPNEEDIVHSRKATVSINSIVFQYTGVSLLMVDVGGQRSERKKWLHLFDDAKVVIFVIDLTGYAKKSEESRTELSRFPNFFNEIGNDAFDMKVALKIFNDVAGSHALANAVFLLFFNKVDLFKELLPQVSLQPCFSKFAEENSYDNTSKFICDKFIRAAKPKKSVFPHFTTATNTENIKMVFRACMESVFKANSKATGLS</sequence>
<name>GPA14_CAEBR</name>